<organism>
    <name type="scientific">Thermus thermophilus (strain ATCC 27634 / DSM 579 / HB8)</name>
    <dbReference type="NCBI Taxonomy" id="300852"/>
    <lineage>
        <taxon>Bacteria</taxon>
        <taxon>Thermotogati</taxon>
        <taxon>Deinococcota</taxon>
        <taxon>Deinococci</taxon>
        <taxon>Thermales</taxon>
        <taxon>Thermaceae</taxon>
        <taxon>Thermus</taxon>
    </lineage>
</organism>
<feature type="chain" id="PRO_0000224733" description="UDP-N-acetylenolpyruvoylglucosamine reductase">
    <location>
        <begin position="1"/>
        <end position="265"/>
    </location>
</feature>
<feature type="domain" description="FAD-binding PCMH-type" evidence="1">
    <location>
        <begin position="15"/>
        <end position="169"/>
    </location>
</feature>
<feature type="region of interest" description="Disordered" evidence="2">
    <location>
        <begin position="182"/>
        <end position="203"/>
    </location>
</feature>
<feature type="active site" evidence="1">
    <location>
        <position position="149"/>
    </location>
</feature>
<feature type="active site" description="Proton donor" evidence="1">
    <location>
        <position position="196"/>
    </location>
</feature>
<feature type="strand" evidence="3">
    <location>
        <begin position="2"/>
        <end position="7"/>
    </location>
</feature>
<feature type="helix" evidence="3">
    <location>
        <begin position="8"/>
        <end position="11"/>
    </location>
</feature>
<feature type="strand" evidence="3">
    <location>
        <begin position="12"/>
        <end position="14"/>
    </location>
</feature>
<feature type="strand" evidence="3">
    <location>
        <begin position="19"/>
        <end position="25"/>
    </location>
</feature>
<feature type="helix" evidence="3">
    <location>
        <begin position="28"/>
        <end position="34"/>
    </location>
</feature>
<feature type="strand" evidence="3">
    <location>
        <begin position="39"/>
        <end position="41"/>
    </location>
</feature>
<feature type="strand" evidence="3">
    <location>
        <begin position="43"/>
        <end position="50"/>
    </location>
</feature>
<feature type="strand" evidence="3">
    <location>
        <begin position="56"/>
        <end position="62"/>
    </location>
</feature>
<feature type="helix" evidence="3">
    <location>
        <begin position="64"/>
        <end position="67"/>
    </location>
</feature>
<feature type="strand" evidence="3">
    <location>
        <begin position="73"/>
        <end position="76"/>
    </location>
</feature>
<feature type="helix" evidence="3">
    <location>
        <begin position="81"/>
        <end position="90"/>
    </location>
</feature>
<feature type="strand" evidence="3">
    <location>
        <begin position="93"/>
        <end position="95"/>
    </location>
</feature>
<feature type="helix" evidence="3">
    <location>
        <begin position="97"/>
        <end position="99"/>
    </location>
</feature>
<feature type="helix" evidence="3">
    <location>
        <begin position="106"/>
        <end position="111"/>
    </location>
</feature>
<feature type="helix" evidence="3">
    <location>
        <begin position="121"/>
        <end position="124"/>
    </location>
</feature>
<feature type="strand" evidence="3">
    <location>
        <begin position="125"/>
        <end position="132"/>
    </location>
</feature>
<feature type="strand" evidence="3">
    <location>
        <begin position="135"/>
        <end position="139"/>
    </location>
</feature>
<feature type="helix" evidence="3">
    <location>
        <begin position="141"/>
        <end position="143"/>
    </location>
</feature>
<feature type="strand" evidence="3">
    <location>
        <begin position="158"/>
        <end position="164"/>
    </location>
</feature>
<feature type="helix" evidence="3">
    <location>
        <begin position="171"/>
        <end position="184"/>
    </location>
</feature>
<feature type="turn" evidence="3">
    <location>
        <begin position="185"/>
        <end position="187"/>
    </location>
</feature>
<feature type="strand" evidence="3">
    <location>
        <begin position="193"/>
        <end position="195"/>
    </location>
</feature>
<feature type="helix" evidence="3">
    <location>
        <begin position="206"/>
        <end position="212"/>
    </location>
</feature>
<feature type="strand" evidence="3">
    <location>
        <begin position="223"/>
        <end position="225"/>
    </location>
</feature>
<feature type="strand" evidence="3">
    <location>
        <begin position="233"/>
        <end position="235"/>
    </location>
</feature>
<feature type="helix" evidence="3">
    <location>
        <begin position="241"/>
        <end position="254"/>
    </location>
</feature>
<feature type="strand" evidence="3">
    <location>
        <begin position="259"/>
        <end position="264"/>
    </location>
</feature>
<keyword id="KW-0002">3D-structure</keyword>
<keyword id="KW-0131">Cell cycle</keyword>
<keyword id="KW-0132">Cell division</keyword>
<keyword id="KW-0133">Cell shape</keyword>
<keyword id="KW-0961">Cell wall biogenesis/degradation</keyword>
<keyword id="KW-0963">Cytoplasm</keyword>
<keyword id="KW-0274">FAD</keyword>
<keyword id="KW-0285">Flavoprotein</keyword>
<keyword id="KW-0521">NADP</keyword>
<keyword id="KW-0560">Oxidoreductase</keyword>
<keyword id="KW-0573">Peptidoglycan synthesis</keyword>
<keyword id="KW-1185">Reference proteome</keyword>
<sequence length="265" mass="29180">MRVERVLLKDYTTLGVGGPAELWTVETREELKRATEAPYRVLGNGSNLLVLDEGVPERVIRLAGEFQTYDLKGWVGAGTLLPLLVQEAARAGLSGLEGLLGIPAQVGGAVKMNAGTRFGEMADALEAVEVFHDGAFHVYCPEELGFGYRKSHLPPGGIVTRVRLKLKERPKEEILRRMAEVDRARKGQPKRKSAGCAFKNPPGQSAGRLIDERGLKGLRVGDAMISLEHGNFIVNLGQARAKDVLELVRRVQEELPLELEWEVWP</sequence>
<comment type="function">
    <text evidence="1">Cell wall formation.</text>
</comment>
<comment type="catalytic activity">
    <reaction evidence="1">
        <text>UDP-N-acetyl-alpha-D-muramate + NADP(+) = UDP-N-acetyl-3-O-(1-carboxyvinyl)-alpha-D-glucosamine + NADPH + H(+)</text>
        <dbReference type="Rhea" id="RHEA:12248"/>
        <dbReference type="ChEBI" id="CHEBI:15378"/>
        <dbReference type="ChEBI" id="CHEBI:57783"/>
        <dbReference type="ChEBI" id="CHEBI:58349"/>
        <dbReference type="ChEBI" id="CHEBI:68483"/>
        <dbReference type="ChEBI" id="CHEBI:70757"/>
        <dbReference type="EC" id="1.3.1.98"/>
    </reaction>
</comment>
<comment type="cofactor">
    <cofactor evidence="1">
        <name>FAD</name>
        <dbReference type="ChEBI" id="CHEBI:57692"/>
    </cofactor>
</comment>
<comment type="pathway">
    <text evidence="1">Cell wall biogenesis; peptidoglycan biosynthesis.</text>
</comment>
<comment type="subcellular location">
    <subcellularLocation>
        <location evidence="1">Cytoplasm</location>
    </subcellularLocation>
</comment>
<comment type="similarity">
    <text evidence="1">Belongs to the MurB family.</text>
</comment>
<accession>Q5SJC8</accession>
<dbReference type="EC" id="1.3.1.98" evidence="1"/>
<dbReference type="EMBL" id="AP008226">
    <property type="protein sequence ID" value="BAD70909.1"/>
    <property type="molecule type" value="Genomic_DNA"/>
</dbReference>
<dbReference type="RefSeq" id="WP_011228429.1">
    <property type="nucleotide sequence ID" value="NC_006461.1"/>
</dbReference>
<dbReference type="RefSeq" id="YP_144352.1">
    <property type="nucleotide sequence ID" value="NC_006461.1"/>
</dbReference>
<dbReference type="PDB" id="2GQT">
    <property type="method" value="X-ray"/>
    <property type="resolution" value="1.30 A"/>
    <property type="chains" value="A=1-265"/>
</dbReference>
<dbReference type="PDB" id="2GQU">
    <property type="method" value="X-ray"/>
    <property type="resolution" value="1.60 A"/>
    <property type="chains" value="A=1-265"/>
</dbReference>
<dbReference type="PDBsum" id="2GQT"/>
<dbReference type="PDBsum" id="2GQU"/>
<dbReference type="SMR" id="Q5SJC8"/>
<dbReference type="EnsemblBacteria" id="BAD70909">
    <property type="protein sequence ID" value="BAD70909"/>
    <property type="gene ID" value="BAD70909"/>
</dbReference>
<dbReference type="GeneID" id="3168182"/>
<dbReference type="KEGG" id="ttj:TTHA1086"/>
<dbReference type="PATRIC" id="fig|300852.9.peg.1066"/>
<dbReference type="eggNOG" id="COG0812">
    <property type="taxonomic scope" value="Bacteria"/>
</dbReference>
<dbReference type="HOGENOM" id="CLU_035304_1_1_0"/>
<dbReference type="PhylomeDB" id="Q5SJC8"/>
<dbReference type="BRENDA" id="1.3.1.98">
    <property type="organism ID" value="6330"/>
</dbReference>
<dbReference type="UniPathway" id="UPA00219"/>
<dbReference type="EvolutionaryTrace" id="Q5SJC8"/>
<dbReference type="Proteomes" id="UP000000532">
    <property type="component" value="Chromosome"/>
</dbReference>
<dbReference type="GO" id="GO:0005829">
    <property type="term" value="C:cytosol"/>
    <property type="evidence" value="ECO:0007669"/>
    <property type="project" value="TreeGrafter"/>
</dbReference>
<dbReference type="GO" id="GO:0071949">
    <property type="term" value="F:FAD binding"/>
    <property type="evidence" value="ECO:0007669"/>
    <property type="project" value="InterPro"/>
</dbReference>
<dbReference type="GO" id="GO:0008762">
    <property type="term" value="F:UDP-N-acetylmuramate dehydrogenase activity"/>
    <property type="evidence" value="ECO:0007669"/>
    <property type="project" value="UniProtKB-UniRule"/>
</dbReference>
<dbReference type="GO" id="GO:0051301">
    <property type="term" value="P:cell division"/>
    <property type="evidence" value="ECO:0007669"/>
    <property type="project" value="UniProtKB-KW"/>
</dbReference>
<dbReference type="GO" id="GO:0071555">
    <property type="term" value="P:cell wall organization"/>
    <property type="evidence" value="ECO:0007669"/>
    <property type="project" value="UniProtKB-KW"/>
</dbReference>
<dbReference type="GO" id="GO:0009252">
    <property type="term" value="P:peptidoglycan biosynthetic process"/>
    <property type="evidence" value="ECO:0007669"/>
    <property type="project" value="UniProtKB-UniRule"/>
</dbReference>
<dbReference type="GO" id="GO:0008360">
    <property type="term" value="P:regulation of cell shape"/>
    <property type="evidence" value="ECO:0007669"/>
    <property type="project" value="UniProtKB-KW"/>
</dbReference>
<dbReference type="Gene3D" id="3.30.465.10">
    <property type="match status" value="1"/>
</dbReference>
<dbReference type="Gene3D" id="3.90.78.10">
    <property type="entry name" value="UDP-N-acetylenolpyruvoylglucosamine reductase, C-terminal domain"/>
    <property type="match status" value="1"/>
</dbReference>
<dbReference type="Gene3D" id="3.30.43.10">
    <property type="entry name" value="Uridine Diphospho-n-acetylenolpyruvylglucosamine Reductase, domain 2"/>
    <property type="match status" value="1"/>
</dbReference>
<dbReference type="HAMAP" id="MF_00037">
    <property type="entry name" value="MurB"/>
    <property type="match status" value="1"/>
</dbReference>
<dbReference type="InterPro" id="IPR016166">
    <property type="entry name" value="FAD-bd_PCMH"/>
</dbReference>
<dbReference type="InterPro" id="IPR036318">
    <property type="entry name" value="FAD-bd_PCMH-like_sf"/>
</dbReference>
<dbReference type="InterPro" id="IPR016167">
    <property type="entry name" value="FAD-bd_PCMH_sub1"/>
</dbReference>
<dbReference type="InterPro" id="IPR016169">
    <property type="entry name" value="FAD-bd_PCMH_sub2"/>
</dbReference>
<dbReference type="InterPro" id="IPR003170">
    <property type="entry name" value="MurB"/>
</dbReference>
<dbReference type="InterPro" id="IPR011601">
    <property type="entry name" value="MurB_C"/>
</dbReference>
<dbReference type="InterPro" id="IPR036635">
    <property type="entry name" value="MurB_C_sf"/>
</dbReference>
<dbReference type="InterPro" id="IPR006094">
    <property type="entry name" value="Oxid_FAD_bind_N"/>
</dbReference>
<dbReference type="NCBIfam" id="TIGR00179">
    <property type="entry name" value="murB"/>
    <property type="match status" value="1"/>
</dbReference>
<dbReference type="NCBIfam" id="NF011245">
    <property type="entry name" value="PRK14651.1"/>
    <property type="match status" value="1"/>
</dbReference>
<dbReference type="PANTHER" id="PTHR21071">
    <property type="entry name" value="UDP-N-ACETYLENOLPYRUVOYLGLUCOSAMINE REDUCTASE"/>
    <property type="match status" value="1"/>
</dbReference>
<dbReference type="PANTHER" id="PTHR21071:SF4">
    <property type="entry name" value="UDP-N-ACETYLENOLPYRUVOYLGLUCOSAMINE REDUCTASE"/>
    <property type="match status" value="1"/>
</dbReference>
<dbReference type="Pfam" id="PF01565">
    <property type="entry name" value="FAD_binding_4"/>
    <property type="match status" value="1"/>
</dbReference>
<dbReference type="Pfam" id="PF02873">
    <property type="entry name" value="MurB_C"/>
    <property type="match status" value="1"/>
</dbReference>
<dbReference type="SUPFAM" id="SSF56176">
    <property type="entry name" value="FAD-binding/transporter-associated domain-like"/>
    <property type="match status" value="1"/>
</dbReference>
<dbReference type="SUPFAM" id="SSF56194">
    <property type="entry name" value="Uridine diphospho-N-Acetylenolpyruvylglucosamine reductase, MurB, C-terminal domain"/>
    <property type="match status" value="1"/>
</dbReference>
<dbReference type="PROSITE" id="PS51387">
    <property type="entry name" value="FAD_PCMH"/>
    <property type="match status" value="1"/>
</dbReference>
<evidence type="ECO:0000255" key="1">
    <source>
        <dbReference type="HAMAP-Rule" id="MF_00037"/>
    </source>
</evidence>
<evidence type="ECO:0000256" key="2">
    <source>
        <dbReference type="SAM" id="MobiDB-lite"/>
    </source>
</evidence>
<evidence type="ECO:0007829" key="3">
    <source>
        <dbReference type="PDB" id="2GQT"/>
    </source>
</evidence>
<proteinExistence type="evidence at protein level"/>
<gene>
    <name evidence="1" type="primary">murB</name>
    <name type="ordered locus">TTHA1086</name>
</gene>
<name>MURB_THET8</name>
<reference key="1">
    <citation type="submission" date="2004-11" db="EMBL/GenBank/DDBJ databases">
        <title>Complete genome sequence of Thermus thermophilus HB8.</title>
        <authorList>
            <person name="Masui R."/>
            <person name="Kurokawa K."/>
            <person name="Nakagawa N."/>
            <person name="Tokunaga F."/>
            <person name="Koyama Y."/>
            <person name="Shibata T."/>
            <person name="Oshima T."/>
            <person name="Yokoyama S."/>
            <person name="Yasunaga T."/>
            <person name="Kuramitsu S."/>
        </authorList>
    </citation>
    <scope>NUCLEOTIDE SEQUENCE [LARGE SCALE GENOMIC DNA]</scope>
    <source>
        <strain>ATCC 27634 / DSM 579 / HB8</strain>
    </source>
</reference>
<protein>
    <recommendedName>
        <fullName evidence="1">UDP-N-acetylenolpyruvoylglucosamine reductase</fullName>
        <ecNumber evidence="1">1.3.1.98</ecNumber>
    </recommendedName>
    <alternativeName>
        <fullName evidence="1">UDP-N-acetylmuramate dehydrogenase</fullName>
    </alternativeName>
</protein>